<feature type="signal peptide" evidence="3">
    <location>
        <begin position="1"/>
        <end position="18"/>
    </location>
</feature>
<feature type="chain" id="PRO_5004053282" description="Lysine racemase">
    <location>
        <begin position="19"/>
        <end position="407"/>
    </location>
</feature>
<feature type="active site" description="Proton acceptor" evidence="2 9">
    <location>
        <position position="74"/>
    </location>
</feature>
<feature type="active site" description="Proton acceptor" evidence="2 9">
    <location>
        <position position="299"/>
    </location>
</feature>
<feature type="binding site" evidence="2">
    <location>
        <position position="173"/>
    </location>
    <ligand>
        <name>substrate</name>
    </ligand>
</feature>
<feature type="binding site" evidence="2">
    <location>
        <position position="347"/>
    </location>
    <ligand>
        <name>substrate</name>
    </ligand>
</feature>
<feature type="modified residue" description="N6-(pyridoxal phosphate)lysine" evidence="2 4 5">
    <location>
        <position position="74"/>
    </location>
</feature>
<feature type="lipid moiety-binding region" description="N-palmitoyl cysteine" evidence="3">
    <location>
        <position position="19"/>
    </location>
</feature>
<feature type="lipid moiety-binding region" description="S-diacylglycerol cysteine" evidence="3">
    <location>
        <position position="19"/>
    </location>
</feature>
<feature type="disulfide bond" evidence="1 2">
    <location>
        <begin position="70"/>
        <end position="96"/>
    </location>
</feature>
<feature type="mutagenesis site" description="Completely loss of racemase activity towards lysine." evidence="5">
    <original>K</original>
    <variation>L</variation>
    <location>
        <position position="74"/>
    </location>
</feature>
<feature type="mutagenesis site" description="Loss of racemase activity towards both L-lysine and L-arginine." evidence="4">
    <original>R</original>
    <variation>A</variation>
    <variation>K</variation>
    <location>
        <position position="173"/>
    </location>
</feature>
<feature type="mutagenesis site" description="Loss of racemase activity towards both L-lysine and L-arginine." evidence="4">
    <original>N</original>
    <variation>L</variation>
    <location>
        <position position="174"/>
    </location>
</feature>
<feature type="mutagenesis site" description="Reduces the racemization activity towards L-lysine by 2-fold. Does not affect racemase activity towards L-arginine." evidence="4">
    <original>T</original>
    <variation>Y</variation>
    <location>
        <position position="391"/>
    </location>
</feature>
<feature type="mutagenesis site" description="Arginine racemization activity is increased by 1.5-1.8 fold compared to the wild-type enzyme, while activity towards L-lysine is decreased. Almost no change in affinity for L-lysine and L-arginine." evidence="5">
    <original>S</original>
    <variation>C</variation>
    <variation>N</variation>
    <variation>T</variation>
    <variation>Y</variation>
    <location>
        <position position="394"/>
    </location>
</feature>
<feature type="strand" evidence="10">
    <location>
        <begin position="42"/>
        <end position="48"/>
    </location>
</feature>
<feature type="helix" evidence="10">
    <location>
        <begin position="49"/>
        <end position="63"/>
    </location>
</feature>
<feature type="strand" evidence="10">
    <location>
        <begin position="69"/>
        <end position="72"/>
    </location>
</feature>
<feature type="turn" evidence="10">
    <location>
        <begin position="76"/>
        <end position="80"/>
    </location>
</feature>
<feature type="helix" evidence="10">
    <location>
        <begin position="82"/>
        <end position="91"/>
    </location>
</feature>
<feature type="strand" evidence="10">
    <location>
        <begin position="96"/>
        <end position="99"/>
    </location>
</feature>
<feature type="helix" evidence="10">
    <location>
        <begin position="102"/>
        <end position="110"/>
    </location>
</feature>
<feature type="strand" evidence="10">
    <location>
        <begin position="115"/>
        <end position="119"/>
    </location>
</feature>
<feature type="helix" evidence="10">
    <location>
        <begin position="125"/>
        <end position="131"/>
    </location>
</feature>
<feature type="helix" evidence="10">
    <location>
        <begin position="132"/>
        <end position="134"/>
    </location>
</feature>
<feature type="strand" evidence="10">
    <location>
        <begin position="136"/>
        <end position="140"/>
    </location>
</feature>
<feature type="helix" evidence="10">
    <location>
        <begin position="143"/>
        <end position="156"/>
    </location>
</feature>
<feature type="strand" evidence="10">
    <location>
        <begin position="160"/>
        <end position="166"/>
    </location>
</feature>
<feature type="helix" evidence="10">
    <location>
        <begin position="181"/>
        <end position="191"/>
    </location>
</feature>
<feature type="strand" evidence="10">
    <location>
        <begin position="196"/>
        <end position="202"/>
    </location>
</feature>
<feature type="helix" evidence="10">
    <location>
        <begin position="210"/>
        <end position="231"/>
    </location>
</feature>
<feature type="helix" evidence="10">
    <location>
        <begin position="235"/>
        <end position="237"/>
    </location>
</feature>
<feature type="strand" evidence="10">
    <location>
        <begin position="238"/>
        <end position="241"/>
    </location>
</feature>
<feature type="helix" evidence="10">
    <location>
        <begin position="245"/>
        <end position="250"/>
    </location>
</feature>
<feature type="helix" evidence="10">
    <location>
        <begin position="252"/>
        <end position="255"/>
    </location>
</feature>
<feature type="strand" evidence="10">
    <location>
        <begin position="258"/>
        <end position="262"/>
    </location>
</feature>
<feature type="helix" evidence="10">
    <location>
        <begin position="263"/>
        <end position="266"/>
    </location>
</feature>
<feature type="strand" evidence="10">
    <location>
        <begin position="279"/>
        <end position="284"/>
    </location>
</feature>
<feature type="strand" evidence="10">
    <location>
        <begin position="287"/>
        <end position="291"/>
    </location>
</feature>
<feature type="strand" evidence="10">
    <location>
        <begin position="296"/>
        <end position="298"/>
    </location>
</feature>
<feature type="helix" evidence="10">
    <location>
        <begin position="299"/>
        <end position="301"/>
    </location>
</feature>
<feature type="strand" evidence="10">
    <location>
        <begin position="306"/>
        <end position="315"/>
    </location>
</feature>
<feature type="helix" evidence="10">
    <location>
        <begin position="318"/>
        <end position="320"/>
    </location>
</feature>
<feature type="helix" evidence="10">
    <location>
        <begin position="324"/>
        <end position="326"/>
    </location>
</feature>
<feature type="turn" evidence="10">
    <location>
        <begin position="327"/>
        <end position="329"/>
    </location>
</feature>
<feature type="strand" evidence="10">
    <location>
        <begin position="331"/>
        <end position="334"/>
    </location>
</feature>
<feature type="strand" evidence="10">
    <location>
        <begin position="337"/>
        <end position="341"/>
    </location>
</feature>
<feature type="strand" evidence="10">
    <location>
        <begin position="350"/>
        <end position="353"/>
    </location>
</feature>
<feature type="strand" evidence="10">
    <location>
        <begin position="365"/>
        <end position="372"/>
    </location>
</feature>
<feature type="strand" evidence="10">
    <location>
        <begin position="375"/>
        <end position="377"/>
    </location>
</feature>
<feature type="helix" evidence="10">
    <location>
        <begin position="379"/>
        <end position="386"/>
    </location>
</feature>
<feature type="helix" evidence="10">
    <location>
        <begin position="390"/>
        <end position="400"/>
    </location>
</feature>
<feature type="strand" evidence="10">
    <location>
        <begin position="401"/>
        <end position="406"/>
    </location>
</feature>
<keyword id="KW-0002">3D-structure</keyword>
<keyword id="KW-1003">Cell membrane</keyword>
<keyword id="KW-1015">Disulfide bond</keyword>
<keyword id="KW-0413">Isomerase</keyword>
<keyword id="KW-0449">Lipoprotein</keyword>
<keyword id="KW-0472">Membrane</keyword>
<keyword id="KW-0564">Palmitate</keyword>
<keyword id="KW-0574">Periplasm</keyword>
<keyword id="KW-0663">Pyridoxal phosphate</keyword>
<keyword id="KW-0732">Signal</keyword>
<reference key="1">
    <citation type="journal article" date="2011" name="Process Biochem.">
        <title>Biochemical characterization of a novel lysine racemase from Proteus mirabilis BCRC10725.</title>
        <authorList>
            <person name="Kuana Y.C."/>
            <person name="Kaob C.H."/>
            <person name="Chenc C.H."/>
            <person name="Chend C.C."/>
            <person name="Hue H.Y."/>
            <person name="Hsua W.H."/>
        </authorList>
    </citation>
    <scope>FUNCTION</scope>
    <scope>CATALYTIC ACTIVITY</scope>
    <scope>SUBSTRATE SPECIFICITY</scope>
    <scope>ACTIVITY REGULATION</scope>
    <scope>BIOPHYSICOCHEMICAL PROPERTIES</scope>
    <scope>COFACTOR</scope>
    <scope>MUTAGENESIS OF LYS-74 AND SER-394</scope>
    <scope>PYRIDOXAL PHOSPHATE AT LYS-74</scope>
    <source>
        <strain>BCRC 10725</strain>
    </source>
</reference>
<reference key="2">
    <citation type="journal article" date="2012" name="PLoS ONE">
        <title>Crystal structures of lysine-preferred racemases, the non-antibiotic selectable markers for transgenic plants.</title>
        <authorList>
            <person name="Wu H.M."/>
            <person name="Kuan Y.C."/>
            <person name="Chu C.H."/>
            <person name="Hsu W.H."/>
            <person name="Wang W.C."/>
        </authorList>
    </citation>
    <scope>X-RAY CRYSTALLOGRAPHY (1.74 ANGSTROMS) IN COMPLEX WITH PLP</scope>
    <scope>FUNCTION</scope>
    <scope>CATALYTIC ACTIVITY</scope>
    <scope>SUBSTRATE SPECIFICITY</scope>
    <scope>COFACTOR</scope>
    <scope>SUBUNIT</scope>
    <scope>ACTIVE SITES</scope>
    <scope>REACTION MECHANISM</scope>
    <scope>MUTAGENESIS OF ARG-173; ASN-174 AND THR-391</scope>
    <source>
        <strain>BCRC 10725</strain>
    </source>
</reference>
<sequence>MSLGIRYLALLPLFVITACQQPVNYNPPATQVAQVQPAIVNNSWIEISRSALDFNVKKVQSLLGKQSSLCAVLKGDAYGHDLSLVAPIMIENNVKCIGVTNNQELKEVRDLGFKGRLMRVRNATEQEMAQATNYNVEELIGDLDMAKRLDAIAKQQNKVIPIHLALNSGGMSRNGLEVDNKSGLEKAKQISQLANLKVVGIMSHYPEEDANKVREDLARFKQQSQQVLEVMGLERNNVTLHMANTFATITVPESWLDMVRVGGIFYGDTIASTDYKRVMTFKSNIASINYYPKGNTVGYDRTYTLKRDSVLANIPVGYADGYRRVFSNAGHALIAGQRVPVLGKTSMNTVIVDITSLNNIKPGDEVVFFGKQGNSEITAEEIEDISGALFTEMSILWGATNQRVLVD</sequence>
<proteinExistence type="evidence at protein level"/>
<gene>
    <name evidence="7" type="primary">lyr</name>
</gene>
<evidence type="ECO:0000250" key="1">
    <source>
        <dbReference type="UniProtKB" id="I0J1I6"/>
    </source>
</evidence>
<evidence type="ECO:0000255" key="2">
    <source>
        <dbReference type="HAMAP-Rule" id="MF_02212"/>
    </source>
</evidence>
<evidence type="ECO:0000255" key="3">
    <source>
        <dbReference type="PROSITE-ProRule" id="PRU00303"/>
    </source>
</evidence>
<evidence type="ECO:0000269" key="4">
    <source>
    </source>
</evidence>
<evidence type="ECO:0000269" key="5">
    <source ref="1"/>
</evidence>
<evidence type="ECO:0000303" key="6">
    <source>
    </source>
</evidence>
<evidence type="ECO:0000303" key="7">
    <source ref="1"/>
</evidence>
<evidence type="ECO:0000305" key="8"/>
<evidence type="ECO:0000305" key="9">
    <source>
    </source>
</evidence>
<evidence type="ECO:0007829" key="10">
    <source>
        <dbReference type="PDB" id="4DZA"/>
    </source>
</evidence>
<dbReference type="EC" id="5.1.1.5" evidence="4 5"/>
<dbReference type="PDB" id="4DZA">
    <property type="method" value="X-ray"/>
    <property type="resolution" value="1.74 A"/>
    <property type="chains" value="A=1-407"/>
</dbReference>
<dbReference type="PDBsum" id="4DZA"/>
<dbReference type="SMR" id="M4GGR9"/>
<dbReference type="STRING" id="584.AOUC001_06285"/>
<dbReference type="BRENDA" id="5.1.1.5">
    <property type="organism ID" value="5044"/>
</dbReference>
<dbReference type="EvolutionaryTrace" id="M4GGR9"/>
<dbReference type="GO" id="GO:0005829">
    <property type="term" value="C:cytosol"/>
    <property type="evidence" value="ECO:0007669"/>
    <property type="project" value="TreeGrafter"/>
</dbReference>
<dbReference type="GO" id="GO:0042597">
    <property type="term" value="C:periplasmic space"/>
    <property type="evidence" value="ECO:0007669"/>
    <property type="project" value="UniProtKB-SubCell"/>
</dbReference>
<dbReference type="GO" id="GO:0005886">
    <property type="term" value="C:plasma membrane"/>
    <property type="evidence" value="ECO:0007669"/>
    <property type="project" value="UniProtKB-SubCell"/>
</dbReference>
<dbReference type="GO" id="GO:0008784">
    <property type="term" value="F:alanine racemase activity"/>
    <property type="evidence" value="ECO:0007669"/>
    <property type="project" value="InterPro"/>
</dbReference>
<dbReference type="GO" id="GO:0047679">
    <property type="term" value="F:arginine racemase activity"/>
    <property type="evidence" value="ECO:0007669"/>
    <property type="project" value="RHEA"/>
</dbReference>
<dbReference type="GO" id="GO:0018113">
    <property type="term" value="F:lysine racemase activity"/>
    <property type="evidence" value="ECO:0007669"/>
    <property type="project" value="UniProtKB-EC"/>
</dbReference>
<dbReference type="GO" id="GO:0030170">
    <property type="term" value="F:pyridoxal phosphate binding"/>
    <property type="evidence" value="ECO:0007669"/>
    <property type="project" value="UniProtKB-UniRule"/>
</dbReference>
<dbReference type="CDD" id="cd06826">
    <property type="entry name" value="PLPDE_III_AR2"/>
    <property type="match status" value="1"/>
</dbReference>
<dbReference type="Gene3D" id="3.20.20.10">
    <property type="entry name" value="Alanine racemase"/>
    <property type="match status" value="1"/>
</dbReference>
<dbReference type="Gene3D" id="2.40.37.10">
    <property type="entry name" value="Lyase, Ornithine Decarboxylase, Chain A, domain 1"/>
    <property type="match status" value="1"/>
</dbReference>
<dbReference type="HAMAP" id="MF_02212">
    <property type="entry name" value="Bsr_racemase"/>
    <property type="match status" value="1"/>
</dbReference>
<dbReference type="InterPro" id="IPR000821">
    <property type="entry name" value="Ala_racemase"/>
</dbReference>
<dbReference type="InterPro" id="IPR009006">
    <property type="entry name" value="Ala_racemase/Decarboxylase_C"/>
</dbReference>
<dbReference type="InterPro" id="IPR011079">
    <property type="entry name" value="Ala_racemase_C"/>
</dbReference>
<dbReference type="InterPro" id="IPR001608">
    <property type="entry name" value="Ala_racemase_N"/>
</dbReference>
<dbReference type="InterPro" id="IPR020622">
    <property type="entry name" value="Ala_racemase_pyridoxalP-BS"/>
</dbReference>
<dbReference type="InterPro" id="IPR029066">
    <property type="entry name" value="PLP-binding_barrel"/>
</dbReference>
<dbReference type="InterPro" id="IPR043698">
    <property type="entry name" value="Racemase_Bsr/Lyr"/>
</dbReference>
<dbReference type="NCBIfam" id="TIGR00492">
    <property type="entry name" value="alr"/>
    <property type="match status" value="1"/>
</dbReference>
<dbReference type="NCBIfam" id="NF009879">
    <property type="entry name" value="PRK13340.1-4"/>
    <property type="match status" value="1"/>
</dbReference>
<dbReference type="PANTHER" id="PTHR30511">
    <property type="entry name" value="ALANINE RACEMASE"/>
    <property type="match status" value="1"/>
</dbReference>
<dbReference type="PANTHER" id="PTHR30511:SF0">
    <property type="entry name" value="ALANINE RACEMASE, CATABOLIC-RELATED"/>
    <property type="match status" value="1"/>
</dbReference>
<dbReference type="Pfam" id="PF00842">
    <property type="entry name" value="Ala_racemase_C"/>
    <property type="match status" value="1"/>
</dbReference>
<dbReference type="Pfam" id="PF01168">
    <property type="entry name" value="Ala_racemase_N"/>
    <property type="match status" value="1"/>
</dbReference>
<dbReference type="PRINTS" id="PR00992">
    <property type="entry name" value="ALARACEMASE"/>
</dbReference>
<dbReference type="SMART" id="SM01005">
    <property type="entry name" value="Ala_racemase_C"/>
    <property type="match status" value="1"/>
</dbReference>
<dbReference type="SUPFAM" id="SSF50621">
    <property type="entry name" value="Alanine racemase C-terminal domain-like"/>
    <property type="match status" value="1"/>
</dbReference>
<dbReference type="SUPFAM" id="SSF51419">
    <property type="entry name" value="PLP-binding barrel"/>
    <property type="match status" value="1"/>
</dbReference>
<dbReference type="PROSITE" id="PS00395">
    <property type="entry name" value="ALANINE_RACEMASE"/>
    <property type="match status" value="1"/>
</dbReference>
<dbReference type="PROSITE" id="PS51257">
    <property type="entry name" value="PROKAR_LIPOPROTEIN"/>
    <property type="match status" value="1"/>
</dbReference>
<organism>
    <name type="scientific">Proteus mirabilis</name>
    <dbReference type="NCBI Taxonomy" id="584"/>
    <lineage>
        <taxon>Bacteria</taxon>
        <taxon>Pseudomonadati</taxon>
        <taxon>Pseudomonadota</taxon>
        <taxon>Gammaproteobacteria</taxon>
        <taxon>Enterobacterales</taxon>
        <taxon>Morganellaceae</taxon>
        <taxon>Proteus</taxon>
    </lineage>
</organism>
<accession>M4GGR9</accession>
<protein>
    <recommendedName>
        <fullName evidence="6 7">Lysine racemase</fullName>
        <ecNumber evidence="4 5">5.1.1.5</ecNumber>
    </recommendedName>
</protein>
<name>LYR_PROMI</name>
<comment type="function">
    <text evidence="4 5">Amino-acid racemase that catalyzes the interconversion of L-lysine and D-lysine. To a lesser extent, is also able to interconvert arginine enantiomers (PubMed:23118975, Ref.1). Cannot use methionine, asparagine, alanine, leucine, glutamine, phenylalanine and histidine as substrates (Ref.1).</text>
</comment>
<comment type="catalytic activity">
    <reaction evidence="4 5">
        <text>L-lysine = D-lysine</text>
        <dbReference type="Rhea" id="RHEA:22864"/>
        <dbReference type="ChEBI" id="CHEBI:32551"/>
        <dbReference type="ChEBI" id="CHEBI:32557"/>
        <dbReference type="EC" id="5.1.1.5"/>
    </reaction>
</comment>
<comment type="catalytic activity">
    <reaction evidence="4 5">
        <text>L-arginine = D-arginine</text>
        <dbReference type="Rhea" id="RHEA:18069"/>
        <dbReference type="ChEBI" id="CHEBI:32682"/>
        <dbReference type="ChEBI" id="CHEBI:32689"/>
    </reaction>
</comment>
<comment type="cofactor">
    <cofactor evidence="2 4 5">
        <name>pyridoxal 5'-phosphate</name>
        <dbReference type="ChEBI" id="CHEBI:597326"/>
    </cofactor>
</comment>
<comment type="activity regulation">
    <text evidence="5">The racemization activity of Lyr is completely inhibited by hydroxylamine.</text>
</comment>
<comment type="biophysicochemical properties">
    <kinetics>
        <KM evidence="5">21.8 mM for L-lysine</KM>
        <KM evidence="5">15 mM for D-lysine</KM>
        <KM evidence="5">14.9 mM for L-arginine</KM>
        <text evidence="5">kcat is 3326 min(-1) with L-lysine as substrate. kcat is 650 min(-1) with L-arginine as substrate.</text>
    </kinetics>
    <phDependence>
        <text evidence="5">Optimum pH is 8.0-9.0.</text>
    </phDependence>
    <temperatureDependence>
        <text evidence="5">Optimum temperature is 50 degrees Celsius. More than 78% of maximal activity is observed at 40 degrees Celsius and 60 degrees Celsius.</text>
    </temperatureDependence>
</comment>
<comment type="subunit">
    <text evidence="4">Forms a head-to-tail homodimer in the structure.</text>
</comment>
<comment type="subcellular location">
    <subcellularLocation>
        <location evidence="3">Cell membrane</location>
        <topology evidence="3">Lipid-anchor</topology>
        <orientation evidence="8">Periplasmic side</orientation>
    </subcellularLocation>
    <subcellularLocation>
        <location evidence="1">Periplasm</location>
    </subcellularLocation>
</comment>
<comment type="miscellaneous">
    <text evidence="9">The active-site cleft is located at the dimeric interface and contains the two conserved catalytic residues, a lysine from one subunit and a tyrosine from the other subunit.</text>
</comment>
<comment type="similarity">
    <text evidence="2 8">Belongs to the alanine racemase family. Bsr subfamily.</text>
</comment>